<dbReference type="EC" id="3.1.6.1" evidence="5 9"/>
<dbReference type="EC" id="3.1.6.15" evidence="6"/>
<dbReference type="EMBL" id="AB023218">
    <property type="protein sequence ID" value="BAA76845.2"/>
    <property type="status" value="ALT_INIT"/>
    <property type="molecule type" value="mRNA"/>
</dbReference>
<dbReference type="EMBL" id="AY358380">
    <property type="protein sequence ID" value="AAQ88746.1"/>
    <property type="molecule type" value="mRNA"/>
</dbReference>
<dbReference type="EMBL" id="BC012375">
    <property type="protein sequence ID" value="AAH12375.1"/>
    <property type="molecule type" value="mRNA"/>
</dbReference>
<dbReference type="CCDS" id="CCDS11676.1"/>
<dbReference type="RefSeq" id="NP_001254656.1">
    <property type="nucleotide sequence ID" value="NM_001267727.2"/>
</dbReference>
<dbReference type="RefSeq" id="NP_001339828.1">
    <property type="nucleotide sequence ID" value="NM_001352899.2"/>
</dbReference>
<dbReference type="RefSeq" id="NP_001339829.1">
    <property type="nucleotide sequence ID" value="NM_001352900.2"/>
</dbReference>
<dbReference type="RefSeq" id="NP_001339830.1">
    <property type="nucleotide sequence ID" value="NM_001352901.2"/>
</dbReference>
<dbReference type="RefSeq" id="NP_001339831.1">
    <property type="nucleotide sequence ID" value="NM_001352902.2"/>
</dbReference>
<dbReference type="RefSeq" id="NP_055775.2">
    <property type="nucleotide sequence ID" value="NM_014960.4"/>
</dbReference>
<dbReference type="RefSeq" id="XP_005257227.1">
    <property type="nucleotide sequence ID" value="XM_005257170.3"/>
</dbReference>
<dbReference type="RefSeq" id="XP_016879850.1">
    <property type="nucleotide sequence ID" value="XM_017024361.1"/>
</dbReference>
<dbReference type="RefSeq" id="XP_016879851.1">
    <property type="nucleotide sequence ID" value="XM_017024362.1"/>
</dbReference>
<dbReference type="RefSeq" id="XP_016879852.1">
    <property type="nucleotide sequence ID" value="XM_017024363.1"/>
</dbReference>
<dbReference type="RefSeq" id="XP_016879853.1">
    <property type="nucleotide sequence ID" value="XM_017024364.1"/>
</dbReference>
<dbReference type="RefSeq" id="XP_016879854.1">
    <property type="nucleotide sequence ID" value="XM_017024365.2"/>
</dbReference>
<dbReference type="RefSeq" id="XP_047291594.1">
    <property type="nucleotide sequence ID" value="XM_047435638.1"/>
</dbReference>
<dbReference type="RefSeq" id="XP_047291595.1">
    <property type="nucleotide sequence ID" value="XM_047435639.1"/>
</dbReference>
<dbReference type="RefSeq" id="XP_047291596.1">
    <property type="nucleotide sequence ID" value="XM_047435640.1"/>
</dbReference>
<dbReference type="RefSeq" id="XP_054171482.1">
    <property type="nucleotide sequence ID" value="XM_054315507.1"/>
</dbReference>
<dbReference type="RefSeq" id="XP_054171483.1">
    <property type="nucleotide sequence ID" value="XM_054315508.1"/>
</dbReference>
<dbReference type="RefSeq" id="XP_054171484.1">
    <property type="nucleotide sequence ID" value="XM_054315509.1"/>
</dbReference>
<dbReference type="SMR" id="Q96EG1"/>
<dbReference type="BioGRID" id="116565">
    <property type="interactions" value="93"/>
</dbReference>
<dbReference type="FunCoup" id="Q96EG1">
    <property type="interactions" value="285"/>
</dbReference>
<dbReference type="IntAct" id="Q96EG1">
    <property type="interactions" value="32"/>
</dbReference>
<dbReference type="STRING" id="9606.ENSP00000407193"/>
<dbReference type="ChEMBL" id="CHEMBL2189124"/>
<dbReference type="GlyCosmos" id="Q96EG1">
    <property type="glycosylation" value="4 sites, No reported glycans"/>
</dbReference>
<dbReference type="GlyGen" id="Q96EG1">
    <property type="glycosylation" value="4 sites"/>
</dbReference>
<dbReference type="iPTMnet" id="Q96EG1"/>
<dbReference type="PhosphoSitePlus" id="Q96EG1"/>
<dbReference type="BioMuta" id="ARSG"/>
<dbReference type="DMDM" id="74731559"/>
<dbReference type="MassIVE" id="Q96EG1"/>
<dbReference type="PaxDb" id="9606-ENSP00000407193"/>
<dbReference type="PeptideAtlas" id="Q96EG1"/>
<dbReference type="ProteomicsDB" id="76405"/>
<dbReference type="Antibodypedia" id="19259">
    <property type="antibodies" value="185 antibodies from 23 providers"/>
</dbReference>
<dbReference type="DNASU" id="22901"/>
<dbReference type="Ensembl" id="ENST00000448504.6">
    <property type="protein sequence ID" value="ENSP00000407193.2"/>
    <property type="gene ID" value="ENSG00000141337.13"/>
</dbReference>
<dbReference type="Ensembl" id="ENST00000621439.5">
    <property type="protein sequence ID" value="ENSP00000480910.1"/>
    <property type="gene ID" value="ENSG00000141337.13"/>
</dbReference>
<dbReference type="GeneID" id="22901"/>
<dbReference type="KEGG" id="hsa:22901"/>
<dbReference type="MANE-Select" id="ENST00000621439.5">
    <property type="protein sequence ID" value="ENSP00000480910.1"/>
    <property type="RefSeq nucleotide sequence ID" value="NM_001267727.2"/>
    <property type="RefSeq protein sequence ID" value="NP_001254656.1"/>
</dbReference>
<dbReference type="UCSC" id="uc002jhc.3">
    <property type="organism name" value="human"/>
</dbReference>
<dbReference type="AGR" id="HGNC:24102"/>
<dbReference type="CTD" id="22901"/>
<dbReference type="DisGeNET" id="22901"/>
<dbReference type="GeneCards" id="ARSG"/>
<dbReference type="HGNC" id="HGNC:24102">
    <property type="gene designation" value="ARSG"/>
</dbReference>
<dbReference type="HPA" id="ENSG00000141337">
    <property type="expression patterns" value="Tissue enhanced (epididymis)"/>
</dbReference>
<dbReference type="MalaCards" id="ARSG"/>
<dbReference type="MIM" id="610008">
    <property type="type" value="gene"/>
</dbReference>
<dbReference type="MIM" id="618144">
    <property type="type" value="phenotype"/>
</dbReference>
<dbReference type="neXtProt" id="NX_Q96EG1"/>
<dbReference type="OpenTargets" id="ENSG00000141337"/>
<dbReference type="Orphanet" id="231183">
    <property type="disease" value="Usher syndrome type 3"/>
</dbReference>
<dbReference type="PharmGKB" id="PA143485307"/>
<dbReference type="VEuPathDB" id="HostDB:ENSG00000141337"/>
<dbReference type="eggNOG" id="KOG3867">
    <property type="taxonomic scope" value="Eukaryota"/>
</dbReference>
<dbReference type="GeneTree" id="ENSGT00940000159093"/>
<dbReference type="HOGENOM" id="CLU_006332_13_6_1"/>
<dbReference type="InParanoid" id="Q96EG1"/>
<dbReference type="OMA" id="HVACRCQ"/>
<dbReference type="OrthoDB" id="103349at2759"/>
<dbReference type="PAN-GO" id="Q96EG1">
    <property type="GO annotations" value="1 GO annotation based on evolutionary models"/>
</dbReference>
<dbReference type="PhylomeDB" id="Q96EG1"/>
<dbReference type="TreeFam" id="TF314186"/>
<dbReference type="PathwayCommons" id="Q96EG1"/>
<dbReference type="Reactome" id="R-HSA-1663150">
    <property type="pathway name" value="The activation of arylsulfatases"/>
</dbReference>
<dbReference type="Reactome" id="R-HSA-9840310">
    <property type="pathway name" value="Glycosphingolipid catabolism"/>
</dbReference>
<dbReference type="SABIO-RK" id="Q96EG1"/>
<dbReference type="SignaLink" id="Q96EG1"/>
<dbReference type="BioGRID-ORCS" id="22901">
    <property type="hits" value="14 hits in 1148 CRISPR screens"/>
</dbReference>
<dbReference type="ChiTaRS" id="ARSG">
    <property type="organism name" value="human"/>
</dbReference>
<dbReference type="GenomeRNAi" id="22901"/>
<dbReference type="Pharos" id="Q96EG1">
    <property type="development level" value="Tbio"/>
</dbReference>
<dbReference type="PRO" id="PR:Q96EG1"/>
<dbReference type="Proteomes" id="UP000005640">
    <property type="component" value="Chromosome 17"/>
</dbReference>
<dbReference type="RNAct" id="Q96EG1">
    <property type="molecule type" value="protein"/>
</dbReference>
<dbReference type="Bgee" id="ENSG00000141337">
    <property type="expression patterns" value="Expressed in blood and 107 other cell types or tissues"/>
</dbReference>
<dbReference type="ExpressionAtlas" id="Q96EG1">
    <property type="expression patterns" value="baseline and differential"/>
</dbReference>
<dbReference type="GO" id="GO:0005783">
    <property type="term" value="C:endoplasmic reticulum"/>
    <property type="evidence" value="ECO:0000314"/>
    <property type="project" value="HGNC-UCL"/>
</dbReference>
<dbReference type="GO" id="GO:0005788">
    <property type="term" value="C:endoplasmic reticulum lumen"/>
    <property type="evidence" value="ECO:0000304"/>
    <property type="project" value="Reactome"/>
</dbReference>
<dbReference type="GO" id="GO:0005615">
    <property type="term" value="C:extracellular space"/>
    <property type="evidence" value="ECO:0000314"/>
    <property type="project" value="UniProtKB"/>
</dbReference>
<dbReference type="GO" id="GO:0005764">
    <property type="term" value="C:lysosome"/>
    <property type="evidence" value="ECO:0000314"/>
    <property type="project" value="UniProtKB"/>
</dbReference>
<dbReference type="GO" id="GO:0004065">
    <property type="term" value="F:arylsulfatase activity"/>
    <property type="evidence" value="ECO:0000314"/>
    <property type="project" value="UniProtKB"/>
</dbReference>
<dbReference type="GO" id="GO:0046872">
    <property type="term" value="F:metal ion binding"/>
    <property type="evidence" value="ECO:0007669"/>
    <property type="project" value="UniProtKB-KW"/>
</dbReference>
<dbReference type="GO" id="GO:0033889">
    <property type="term" value="F:N-sulfoglucosamine-3-sulfatase activity"/>
    <property type="evidence" value="ECO:0000314"/>
    <property type="project" value="UniProtKB"/>
</dbReference>
<dbReference type="GO" id="GO:0010467">
    <property type="term" value="P:gene expression"/>
    <property type="evidence" value="ECO:0007669"/>
    <property type="project" value="Ensembl"/>
</dbReference>
<dbReference type="GO" id="GO:0010001">
    <property type="term" value="P:glial cell differentiation"/>
    <property type="evidence" value="ECO:0007669"/>
    <property type="project" value="Ensembl"/>
</dbReference>
<dbReference type="GO" id="GO:0048872">
    <property type="term" value="P:homeostasis of number of cells"/>
    <property type="evidence" value="ECO:0007669"/>
    <property type="project" value="Ensembl"/>
</dbReference>
<dbReference type="GO" id="GO:0007040">
    <property type="term" value="P:lysosome organization"/>
    <property type="evidence" value="ECO:0007669"/>
    <property type="project" value="Ensembl"/>
</dbReference>
<dbReference type="GO" id="GO:0051402">
    <property type="term" value="P:neuron apoptotic process"/>
    <property type="evidence" value="ECO:0007669"/>
    <property type="project" value="Ensembl"/>
</dbReference>
<dbReference type="GO" id="GO:0060041">
    <property type="term" value="P:retina development in camera-type eye"/>
    <property type="evidence" value="ECO:0007669"/>
    <property type="project" value="Ensembl"/>
</dbReference>
<dbReference type="GO" id="GO:0006790">
    <property type="term" value="P:sulfur compound metabolic process"/>
    <property type="evidence" value="ECO:0000314"/>
    <property type="project" value="UniProtKB"/>
</dbReference>
<dbReference type="CDD" id="cd16161">
    <property type="entry name" value="ARSG"/>
    <property type="match status" value="1"/>
</dbReference>
<dbReference type="FunFam" id="3.30.1120.10:FF:000006">
    <property type="entry name" value="Arylsulfatase G"/>
    <property type="match status" value="1"/>
</dbReference>
<dbReference type="FunFam" id="3.40.720.10:FF:000031">
    <property type="entry name" value="arylsulfatase G isoform X1"/>
    <property type="match status" value="1"/>
</dbReference>
<dbReference type="Gene3D" id="3.30.1120.10">
    <property type="match status" value="1"/>
</dbReference>
<dbReference type="Gene3D" id="3.40.720.10">
    <property type="entry name" value="Alkaline Phosphatase, subunit A"/>
    <property type="match status" value="1"/>
</dbReference>
<dbReference type="InterPro" id="IPR017850">
    <property type="entry name" value="Alkaline_phosphatase_core_sf"/>
</dbReference>
<dbReference type="InterPro" id="IPR050738">
    <property type="entry name" value="Sulfatase"/>
</dbReference>
<dbReference type="InterPro" id="IPR024607">
    <property type="entry name" value="Sulfatase_CS"/>
</dbReference>
<dbReference type="InterPro" id="IPR000917">
    <property type="entry name" value="Sulfatase_N"/>
</dbReference>
<dbReference type="PANTHER" id="PTHR42693">
    <property type="entry name" value="ARYLSULFATASE FAMILY MEMBER"/>
    <property type="match status" value="1"/>
</dbReference>
<dbReference type="PANTHER" id="PTHR42693:SF42">
    <property type="entry name" value="ARYLSULFATASE G"/>
    <property type="match status" value="1"/>
</dbReference>
<dbReference type="Pfam" id="PF00884">
    <property type="entry name" value="Sulfatase"/>
    <property type="match status" value="1"/>
</dbReference>
<dbReference type="Pfam" id="PF14707">
    <property type="entry name" value="Sulfatase_C"/>
    <property type="match status" value="1"/>
</dbReference>
<dbReference type="SUPFAM" id="SSF53649">
    <property type="entry name" value="Alkaline phosphatase-like"/>
    <property type="match status" value="1"/>
</dbReference>
<dbReference type="PROSITE" id="PS00523">
    <property type="entry name" value="SULFATASE_1"/>
    <property type="match status" value="1"/>
</dbReference>
<dbReference type="PROSITE" id="PS00149">
    <property type="entry name" value="SULFATASE_2"/>
    <property type="match status" value="1"/>
</dbReference>
<feature type="signal peptide" evidence="3">
    <location>
        <begin position="1"/>
        <end position="16"/>
    </location>
</feature>
<feature type="chain" id="PRO_0000042215" description="Arylsulfatase G">
    <location>
        <begin position="17"/>
        <end position="525"/>
    </location>
</feature>
<feature type="active site" description="Nucleophile" evidence="5">
    <location>
        <position position="84"/>
    </location>
</feature>
<feature type="active site" evidence="1">
    <location>
        <position position="139"/>
    </location>
</feature>
<feature type="binding site" evidence="1">
    <location>
        <position position="44"/>
    </location>
    <ligand>
        <name>Ca(2+)</name>
        <dbReference type="ChEBI" id="CHEBI:29108"/>
    </ligand>
</feature>
<feature type="binding site" evidence="1">
    <location>
        <position position="45"/>
    </location>
    <ligand>
        <name>Ca(2+)</name>
        <dbReference type="ChEBI" id="CHEBI:29108"/>
    </ligand>
</feature>
<feature type="binding site" description="via 3-oxoalanine" evidence="1">
    <location>
        <position position="84"/>
    </location>
    <ligand>
        <name>Ca(2+)</name>
        <dbReference type="ChEBI" id="CHEBI:29108"/>
    </ligand>
</feature>
<feature type="binding site" evidence="1">
    <location>
        <position position="137"/>
    </location>
    <ligand>
        <name>substrate</name>
    </ligand>
</feature>
<feature type="binding site" evidence="1">
    <location>
        <position position="162"/>
    </location>
    <ligand>
        <name>substrate</name>
    </ligand>
</feature>
<feature type="binding site" evidence="1">
    <location>
        <position position="251"/>
    </location>
    <ligand>
        <name>substrate</name>
    </ligand>
</feature>
<feature type="binding site" evidence="1">
    <location>
        <position position="302"/>
    </location>
    <ligand>
        <name>Ca(2+)</name>
        <dbReference type="ChEBI" id="CHEBI:29108"/>
    </ligand>
</feature>
<feature type="binding site" evidence="1">
    <location>
        <position position="303"/>
    </location>
    <ligand>
        <name>Ca(2+)</name>
        <dbReference type="ChEBI" id="CHEBI:29108"/>
    </ligand>
</feature>
<feature type="modified residue" description="3-oxoalanine (Cys)" evidence="5">
    <location>
        <position position="84"/>
    </location>
</feature>
<feature type="glycosylation site" description="N-linked (GlcNAc...) asparagine" evidence="3">
    <location>
        <position position="117"/>
    </location>
</feature>
<feature type="glycosylation site" description="N-linked (GlcNAc...) asparagine" evidence="3">
    <location>
        <position position="215"/>
    </location>
</feature>
<feature type="glycosylation site" description="N-linked (GlcNAc...) asparagine" evidence="3">
    <location>
        <position position="356"/>
    </location>
</feature>
<feature type="glycosylation site" description="N-linked (GlcNAc...) asparagine" evidence="3">
    <location>
        <position position="497"/>
    </location>
</feature>
<feature type="sequence variant" id="VAR_052511" description="In dbSNP:rs8074806.">
    <original>A</original>
    <variation>V</variation>
    <location>
        <position position="11"/>
    </location>
</feature>
<feature type="sequence variant" id="VAR_081577" description="In USH4; loss of sulfatase activity toward p-nitrocatechol sulfate; loss of processing of the precursor protein suggesting impaired transport to lysosomes." evidence="9">
    <original>D</original>
    <variation>Y</variation>
    <location>
        <position position="45"/>
    </location>
</feature>
<feature type="sequence variant" id="VAR_052512" description="In dbSNP:rs1558876." evidence="8">
    <original>T</original>
    <variation>S</variation>
    <location>
        <position position="236"/>
    </location>
</feature>
<feature type="sequence variant" id="VAR_052513" description="In dbSNP:rs1558878." evidence="8">
    <original>W</original>
    <variation>R</variation>
    <location>
        <position position="274"/>
    </location>
</feature>
<feature type="sequence variant" id="VAR_074038" description="In dbSNP:rs144503106." evidence="8">
    <original>R</original>
    <variation>G</variation>
    <location>
        <position position="326"/>
    </location>
</feature>
<feature type="sequence variant" id="VAR_052514" description="In dbSNP:rs9972951." evidence="8">
    <original>R</original>
    <variation>H</variation>
    <location>
        <position position="385"/>
    </location>
</feature>
<feature type="sequence variant" id="VAR_074039" description="In dbSNP:rs11657051." evidence="8">
    <original>R</original>
    <variation>W</variation>
    <location>
        <position position="398"/>
    </location>
</feature>
<feature type="sequence variant" id="VAR_074040" description="In dbSNP:rs62000424." evidence="8">
    <original>T</original>
    <variation>M</variation>
    <location>
        <position position="444"/>
    </location>
</feature>
<feature type="sequence variant" id="VAR_074041" description="In dbSNP:rs370852507." evidence="8">
    <original>E</original>
    <variation>K</variation>
    <location>
        <position position="481"/>
    </location>
</feature>
<feature type="sequence variant" id="VAR_074042" description="In dbSNP:rs61999318." evidence="8">
    <original>I</original>
    <variation>T</variation>
    <location>
        <position position="493"/>
    </location>
</feature>
<feature type="mutagenesis site" description="No sulfatase activity." evidence="5">
    <original>C</original>
    <variation>A</variation>
    <location>
        <position position="84"/>
    </location>
</feature>
<feature type="mutagenesis site" description="Decrease of sulfatase activity." evidence="5">
    <original>A</original>
    <variation>P</variation>
    <location>
        <position position="501"/>
    </location>
</feature>
<feature type="sequence conflict" description="In Ref. 2; AAQ88746." evidence="10" ref="2">
    <original>TG</original>
    <variation>MV</variation>
    <location>
        <begin position="444"/>
        <end position="445"/>
    </location>
</feature>
<feature type="sequence conflict" description="In Ref. 1; BAA76845." evidence="10" ref="1">
    <original>A</original>
    <variation>P</variation>
    <location>
        <position position="501"/>
    </location>
</feature>
<reference key="1">
    <citation type="journal article" date="1999" name="DNA Res.">
        <title>Prediction of the coding sequences of unidentified human genes. XIII. The complete sequences of 100 new cDNA clones from brain which code for large proteins in vitro.</title>
        <authorList>
            <person name="Nagase T."/>
            <person name="Ishikawa K."/>
            <person name="Suyama M."/>
            <person name="Kikuno R."/>
            <person name="Hirosawa M."/>
            <person name="Miyajima N."/>
            <person name="Tanaka A."/>
            <person name="Kotani H."/>
            <person name="Nomura N."/>
            <person name="Ohara O."/>
        </authorList>
    </citation>
    <scope>NUCLEOTIDE SEQUENCE [LARGE SCALE MRNA]</scope>
    <source>
        <tissue>Brain</tissue>
    </source>
</reference>
<reference key="2">
    <citation type="journal article" date="2003" name="Genome Res.">
        <title>The secreted protein discovery initiative (SPDI), a large-scale effort to identify novel human secreted and transmembrane proteins: a bioinformatics assessment.</title>
        <authorList>
            <person name="Clark H.F."/>
            <person name="Gurney A.L."/>
            <person name="Abaya E."/>
            <person name="Baker K."/>
            <person name="Baldwin D.T."/>
            <person name="Brush J."/>
            <person name="Chen J."/>
            <person name="Chow B."/>
            <person name="Chui C."/>
            <person name="Crowley C."/>
            <person name="Currell B."/>
            <person name="Deuel B."/>
            <person name="Dowd P."/>
            <person name="Eaton D."/>
            <person name="Foster J.S."/>
            <person name="Grimaldi C."/>
            <person name="Gu Q."/>
            <person name="Hass P.E."/>
            <person name="Heldens S."/>
            <person name="Huang A."/>
            <person name="Kim H.S."/>
            <person name="Klimowski L."/>
            <person name="Jin Y."/>
            <person name="Johnson S."/>
            <person name="Lee J."/>
            <person name="Lewis L."/>
            <person name="Liao D."/>
            <person name="Mark M.R."/>
            <person name="Robbie E."/>
            <person name="Sanchez C."/>
            <person name="Schoenfeld J."/>
            <person name="Seshagiri S."/>
            <person name="Simmons L."/>
            <person name="Singh J."/>
            <person name="Smith V."/>
            <person name="Stinson J."/>
            <person name="Vagts A."/>
            <person name="Vandlen R.L."/>
            <person name="Watanabe C."/>
            <person name="Wieand D."/>
            <person name="Woods K."/>
            <person name="Xie M.-H."/>
            <person name="Yansura D.G."/>
            <person name="Yi S."/>
            <person name="Yu G."/>
            <person name="Yuan J."/>
            <person name="Zhang M."/>
            <person name="Zhang Z."/>
            <person name="Goddard A.D."/>
            <person name="Wood W.I."/>
            <person name="Godowski P.J."/>
            <person name="Gray A.M."/>
        </authorList>
    </citation>
    <scope>NUCLEOTIDE SEQUENCE [LARGE SCALE MRNA]</scope>
</reference>
<reference key="3">
    <citation type="journal article" date="2004" name="Genome Res.">
        <title>The status, quality, and expansion of the NIH full-length cDNA project: the Mammalian Gene Collection (MGC).</title>
        <authorList>
            <consortium name="The MGC Project Team"/>
        </authorList>
    </citation>
    <scope>NUCLEOTIDE SEQUENCE [LARGE SCALE MRNA]</scope>
    <source>
        <tissue>Lung</tissue>
    </source>
</reference>
<reference key="4">
    <citation type="journal article" date="2002" name="Eur. J. Hum. Genet.">
        <title>Molecular and biochemical characterisation of a novel sulphatase gene: arylsulfatase G (ARSG).</title>
        <authorList>
            <person name="Ferrante P."/>
            <person name="Messali S."/>
            <person name="Meroni G."/>
            <person name="Ballabio A."/>
        </authorList>
    </citation>
    <scope>SUBCELLULAR LOCATION</scope>
    <scope>TISSUE SPECIFICITY</scope>
    <scope>GLYCOSYLATION</scope>
</reference>
<reference key="5">
    <citation type="journal article" date="2008" name="J. Biol. Chem.">
        <title>Arylsulfatase G, a novel lysosomal sulfatase.</title>
        <authorList>
            <person name="Frese M.A."/>
            <person name="Schulz S."/>
            <person name="Dierks T."/>
        </authorList>
    </citation>
    <scope>FUNCTION</scope>
    <scope>CATALYTIC ACTIVITY</scope>
    <scope>SUBCELLULAR LOCATION</scope>
    <scope>TISSUE SPECIFICITY</scope>
    <scope>OXOALANINE AT CYS-84</scope>
    <scope>GLYCOSYLATION</scope>
    <scope>BIOPHYSICOCHEMICAL PROPERTIES</scope>
    <scope>MUTAGENESIS OF CYS-84 AND ALA-501</scope>
    <scope>ACTIVITY REGULATION</scope>
</reference>
<reference key="6">
    <citation type="journal article" date="2012" name="Proc. Natl. Acad. Sci. U.S.A.">
        <title>Arylsulfatase G inactivation causes loss of heparan sulfate 3-O-sulfatase activity and mucopolysaccharidosis in mice.</title>
        <authorList>
            <person name="Kowalewski B."/>
            <person name="Lamanna W.C."/>
            <person name="Lawrence R."/>
            <person name="Damme M."/>
            <person name="Stroobants S."/>
            <person name="Padva M."/>
            <person name="Kalus I."/>
            <person name="Frese M.A."/>
            <person name="Luebke T."/>
            <person name="Luellmann-Rauch R."/>
            <person name="D'Hooge R."/>
            <person name="Esko J.D."/>
            <person name="Dierks T."/>
        </authorList>
    </citation>
    <scope>FUNCTION</scope>
    <scope>CATALYTIC ACTIVITY</scope>
</reference>
<reference key="7">
    <citation type="journal article" date="2014" name="J. Biol. Chem.">
        <title>Molecular characterization of arylsulfatase G: expression, processing, glycosylation, transport, and activity.</title>
        <authorList>
            <person name="Kowalewski B."/>
            <person name="Luebke T."/>
            <person name="Kollmann K."/>
            <person name="Braulke T."/>
            <person name="Reinheckel T."/>
            <person name="Dierks T."/>
            <person name="Damme M."/>
        </authorList>
    </citation>
    <scope>PROTEOLYTIC CLEAVAGE</scope>
</reference>
<reference key="8">
    <citation type="journal article" date="2018" name="Genet. Med.">
        <title>A homozygous founder missense variant in arylsulfatase G abolishes its enzymatic activity causing atypical Usher syndrome in humans.</title>
        <authorList>
            <person name="Khateb S."/>
            <person name="Kowalewski B."/>
            <person name="Bedoni N."/>
            <person name="Damme M."/>
            <person name="Pollack N."/>
            <person name="Saada A."/>
            <person name="Obolensky A."/>
            <person name="Ben-Yosef T."/>
            <person name="Gross M."/>
            <person name="Dierks T."/>
            <person name="Banin E."/>
            <person name="Rivolta C."/>
            <person name="Sharon D."/>
        </authorList>
    </citation>
    <scope>INVOLVEMENT IN USH4</scope>
    <scope>VARIANT USH4 TYR-45</scope>
    <scope>CHARACTERIZATION OF VARIANT USH4 TYR-45</scope>
    <scope>FUNCTION</scope>
    <scope>CATALYTIC ACTIVITY</scope>
    <scope>TISSUE SPECIFICITY</scope>
</reference>
<reference key="9">
    <citation type="journal article" date="2015" name="J. Neurol.">
        <title>Accumulation of rare variants in the arylsulfatase G (ARSG) gene in task-specific dystonia.</title>
        <authorList>
            <person name="Nibbeling E."/>
            <person name="Schaake S."/>
            <person name="Tijssen M.A."/>
            <person name="Weissbach A."/>
            <person name="Groen J.L."/>
            <person name="Altenmueller E."/>
            <person name="Verbeek D.S."/>
            <person name="Lohmann K."/>
        </authorList>
    </citation>
    <scope>VARIANTS SER-236; ARG-274; GLY-326; HIS-385; TRP-398; MET-444; LYS-481 AND THR-493</scope>
</reference>
<protein>
    <recommendedName>
        <fullName>Arylsulfatase G</fullName>
        <shortName>ASG</shortName>
        <ecNumber evidence="5 9">3.1.6.1</ecNumber>
    </recommendedName>
    <alternativeName>
        <fullName>N-sulfoglucosamine-3-sulfatase</fullName>
        <ecNumber evidence="6">3.1.6.15</ecNumber>
    </alternativeName>
</protein>
<gene>
    <name type="primary">ARSG</name>
    <name type="synonym">KIAA1001</name>
    <name type="ORF">UNQ839/PRO1777</name>
</gene>
<organism>
    <name type="scientific">Homo sapiens</name>
    <name type="common">Human</name>
    <dbReference type="NCBI Taxonomy" id="9606"/>
    <lineage>
        <taxon>Eukaryota</taxon>
        <taxon>Metazoa</taxon>
        <taxon>Chordata</taxon>
        <taxon>Craniata</taxon>
        <taxon>Vertebrata</taxon>
        <taxon>Euteleostomi</taxon>
        <taxon>Mammalia</taxon>
        <taxon>Eutheria</taxon>
        <taxon>Euarchontoglires</taxon>
        <taxon>Primates</taxon>
        <taxon>Haplorrhini</taxon>
        <taxon>Catarrhini</taxon>
        <taxon>Hominidae</taxon>
        <taxon>Homo</taxon>
    </lineage>
</organism>
<accession>Q96EG1</accession>
<accession>Q6UXF2</accession>
<accession>Q9Y2K4</accession>
<sequence>MGWLFLKVLLAGVSFSGFLYPLVDFCISGKTRGQKPNFVIILADDMGWGDLGANWAETKDTANLDKMASEGMRFVDFHAAASTCSPSRASLLTGRLGLRNGVTRNFAVTSVGGLPLNETTLAEVLQQAGYVTGIIGKWHLGHHGSYHPNFRGFDYYFGIPYSHDMGCTDTPGYNHPPCPACPQGDGPSRNLQRDCYTDVALPLYENLNIVEQPVNLSSLAQKYAEKATQFIQRASTSGRPFLLYVALAHMHVPLPVTQLPAAPRGRSLYGAGLWEMDSLVGQIKDKVDHTVKENTFLWFTGDNGPWAQKCELAGSVGPFTGFWQTRQGGSPAKQTTWEGGHRVPALAYWPGRVPVNVTSTALLSVLDIFPTVVALAQASLPQGRRFDGVDVSEVLFGRSQPGHRVLFHPNSGAAGEFGALQTVRLERYKAFYITGGARACDGSTGPELQHKFPLIFNLEDDTAEAVPLERGGAEYQAVLPEVRKVLADVLQDIANDNISSADYTQDPSVTPCCNPYQIACRCQAA</sequence>
<proteinExistence type="evidence at protein level"/>
<name>ARSG_HUMAN</name>
<keyword id="KW-0106">Calcium</keyword>
<keyword id="KW-0209">Deafness</keyword>
<keyword id="KW-0225">Disease variant</keyword>
<keyword id="KW-1015">Disulfide bond</keyword>
<keyword id="KW-0325">Glycoprotein</keyword>
<keyword id="KW-0378">Hydrolase</keyword>
<keyword id="KW-0458">Lysosome</keyword>
<keyword id="KW-0479">Metal-binding</keyword>
<keyword id="KW-1267">Proteomics identification</keyword>
<keyword id="KW-1185">Reference proteome</keyword>
<keyword id="KW-0682">Retinitis pigmentosa</keyword>
<keyword id="KW-0732">Signal</keyword>
<keyword id="KW-0836">Usher syndrome</keyword>
<comment type="function">
    <text evidence="5 6 9">Displays arylsulfatase activity at acidic pH towards artificial substrates, such as p-nitrocatechol sulfate and also, but with a lower activity towards p-nitrophenyl sulfate and 4-methylumbelliferyl sulfate (PubMed:18283100, PubMed:29300381). Catalyzes the hydrolysis of the 3-sulfate groups of the N-sulfo-D-glucosamine 3-O-sulfate units of heparin (PubMed:22689975).</text>
</comment>
<comment type="catalytic activity">
    <reaction evidence="5 9">
        <text>an aryl sulfate + H2O = a phenol + sulfate + H(+)</text>
        <dbReference type="Rhea" id="RHEA:17261"/>
        <dbReference type="ChEBI" id="CHEBI:15377"/>
        <dbReference type="ChEBI" id="CHEBI:15378"/>
        <dbReference type="ChEBI" id="CHEBI:16189"/>
        <dbReference type="ChEBI" id="CHEBI:33853"/>
        <dbReference type="ChEBI" id="CHEBI:140317"/>
        <dbReference type="EC" id="3.1.6.1"/>
    </reaction>
</comment>
<comment type="catalytic activity">
    <reaction evidence="6">
        <text>Hydrolysis of the 3-sulfate groups of the N-sulfo-D-glucosamine 3-O-sulfate units of heparin.</text>
        <dbReference type="EC" id="3.1.6.15"/>
    </reaction>
</comment>
<comment type="cofactor">
    <cofactor evidence="1">
        <name>Ca(2+)</name>
        <dbReference type="ChEBI" id="CHEBI:29108"/>
    </cofactor>
    <text evidence="1">Binds 1 Ca(2+) ion per subunit.</text>
</comment>
<comment type="activity regulation">
    <text evidence="5">Inhibited by phosphate. The phosphate forms a covalent bond with the active site 3-oxoalanine.</text>
</comment>
<comment type="biophysicochemical properties">
    <kinetics>
        <KM evidence="5">4.2 mM for p-nitrocatechol sulfate</KM>
        <Vmax evidence="5">63.5 umol/min/mg enzyme toward p-nitrocatechol sulfate</Vmax>
    </kinetics>
    <phDependence>
        <text evidence="5">Optimum pH is 5.4.</text>
    </phDependence>
    <temperatureDependence>
        <text evidence="5">Most efficient at 45-50 degrees Celsius.</text>
    </temperatureDependence>
</comment>
<comment type="subcellular location">
    <subcellularLocation>
        <location evidence="4 5">Lysosome</location>
    </subcellularLocation>
    <text evidence="2">The 63-kDa precursor protein localizes to pre-lysosomal compartments and tightly associates with organelle membranes, most likely the endoplasmic reticulum. In contrast, proteolytically processed fragments of 34-, 18- and 10-kDa are found in lysosomal fractions and lose their membrane association.</text>
</comment>
<comment type="tissue specificity">
    <text evidence="4 5 9">Widely expressed, with very low expression in brain, lung, heart and skeletal muscle.</text>
</comment>
<comment type="PTM">
    <text evidence="2 5">N-glycosylated (PubMed:18283100). N-glycosylated with both high mannose and complex type sugars (By similarity).</text>
</comment>
<comment type="PTM">
    <text evidence="1">The conversion to 3-oxoalanine (also known as C-formylglycine, FGly), of a serine or cysteine residue in prokaryotes and of a cysteine residue in eukaryotes, is critical for catalytic activity.</text>
</comment>
<comment type="PTM">
    <text evidence="7">The 63-kDa precursor undergoes proteolytic processing in two steps, yielding two fragments in the first step (apparent molecular masses of 44 and 18 kDa) (PubMed:25135642). In the second step, the 44-kDa fragment is processed further to the 34- and 10-kDa chains. The 10-kDa chain is a cleavage product of the 44-kDa fragment but linked to the 18-kDa chain through a disulfide bridge (PubMed:25135642).</text>
</comment>
<comment type="disease" evidence="9">
    <disease id="DI-05348">
        <name>Usher syndrome 4</name>
        <acronym>USH4</acronym>
        <description>A form of Usher syndrome, a genetically heterogeneous condition characterized by the association of retinitis pigmentosa with sensorineural deafness. Age at onset and differences in auditory and vestibular function distinguish different types of Usher syndrome. USH4 is characterized by late onset of retinitis pigmentosa and usually late-onset of progressive sensorineural hearing loss without vestibular involvement. USH4 inheritance is autosomal recessive.</description>
        <dbReference type="MIM" id="618144"/>
    </disease>
    <text>The disease is caused by variants affecting the gene represented in this entry.</text>
</comment>
<comment type="similarity">
    <text evidence="10">Belongs to the sulfatase family.</text>
</comment>
<comment type="sequence caution" evidence="10">
    <conflict type="erroneous initiation">
        <sequence resource="EMBL-CDS" id="BAA76845"/>
    </conflict>
    <text>Extended N-terminus.</text>
</comment>
<evidence type="ECO:0000250" key="1">
    <source>
        <dbReference type="UniProtKB" id="P15289"/>
    </source>
</evidence>
<evidence type="ECO:0000250" key="2">
    <source>
        <dbReference type="UniProtKB" id="Q3TYD4"/>
    </source>
</evidence>
<evidence type="ECO:0000255" key="3"/>
<evidence type="ECO:0000269" key="4">
    <source>
    </source>
</evidence>
<evidence type="ECO:0000269" key="5">
    <source>
    </source>
</evidence>
<evidence type="ECO:0000269" key="6">
    <source>
    </source>
</evidence>
<evidence type="ECO:0000269" key="7">
    <source>
    </source>
</evidence>
<evidence type="ECO:0000269" key="8">
    <source>
    </source>
</evidence>
<evidence type="ECO:0000269" key="9">
    <source>
    </source>
</evidence>
<evidence type="ECO:0000305" key="10"/>